<protein>
    <recommendedName>
        <fullName evidence="1">Uroporphyrinogen decarboxylase</fullName>
        <shortName evidence="1">UPD</shortName>
        <shortName evidence="1">URO-D</shortName>
        <ecNumber evidence="1">4.1.1.37</ecNumber>
    </recommendedName>
</protein>
<dbReference type="EC" id="4.1.1.37" evidence="1"/>
<dbReference type="EMBL" id="CU928163">
    <property type="protein sequence ID" value="CAR15645.1"/>
    <property type="molecule type" value="Genomic_DNA"/>
</dbReference>
<dbReference type="RefSeq" id="WP_000137657.1">
    <property type="nucleotide sequence ID" value="NC_011751.1"/>
</dbReference>
<dbReference type="RefSeq" id="YP_002415135.1">
    <property type="nucleotide sequence ID" value="NC_011751.1"/>
</dbReference>
<dbReference type="SMR" id="B7NFT8"/>
<dbReference type="STRING" id="585056.ECUMN_4521"/>
<dbReference type="GeneID" id="93777897"/>
<dbReference type="KEGG" id="eum:ECUMN_4521"/>
<dbReference type="PATRIC" id="fig|585056.7.peg.4691"/>
<dbReference type="HOGENOM" id="CLU_040933_0_0_6"/>
<dbReference type="UniPathway" id="UPA00251">
    <property type="reaction ID" value="UER00321"/>
</dbReference>
<dbReference type="Proteomes" id="UP000007097">
    <property type="component" value="Chromosome"/>
</dbReference>
<dbReference type="GO" id="GO:0005829">
    <property type="term" value="C:cytosol"/>
    <property type="evidence" value="ECO:0007669"/>
    <property type="project" value="TreeGrafter"/>
</dbReference>
<dbReference type="GO" id="GO:0004853">
    <property type="term" value="F:uroporphyrinogen decarboxylase activity"/>
    <property type="evidence" value="ECO:0007669"/>
    <property type="project" value="UniProtKB-UniRule"/>
</dbReference>
<dbReference type="GO" id="GO:0019353">
    <property type="term" value="P:protoporphyrinogen IX biosynthetic process from glutamate"/>
    <property type="evidence" value="ECO:0007669"/>
    <property type="project" value="TreeGrafter"/>
</dbReference>
<dbReference type="CDD" id="cd00717">
    <property type="entry name" value="URO-D"/>
    <property type="match status" value="1"/>
</dbReference>
<dbReference type="FunFam" id="3.20.20.210:FF:000001">
    <property type="entry name" value="Uroporphyrinogen decarboxylase"/>
    <property type="match status" value="1"/>
</dbReference>
<dbReference type="Gene3D" id="3.20.20.210">
    <property type="match status" value="1"/>
</dbReference>
<dbReference type="HAMAP" id="MF_00218">
    <property type="entry name" value="URO_D"/>
    <property type="match status" value="1"/>
</dbReference>
<dbReference type="InterPro" id="IPR038071">
    <property type="entry name" value="UROD/MetE-like_sf"/>
</dbReference>
<dbReference type="InterPro" id="IPR006361">
    <property type="entry name" value="Uroporphyrinogen_deCO2ase_HemE"/>
</dbReference>
<dbReference type="InterPro" id="IPR000257">
    <property type="entry name" value="Uroporphyrinogen_deCOase"/>
</dbReference>
<dbReference type="NCBIfam" id="TIGR01464">
    <property type="entry name" value="hemE"/>
    <property type="match status" value="1"/>
</dbReference>
<dbReference type="PANTHER" id="PTHR21091">
    <property type="entry name" value="METHYLTETRAHYDROFOLATE:HOMOCYSTEINE METHYLTRANSFERASE RELATED"/>
    <property type="match status" value="1"/>
</dbReference>
<dbReference type="PANTHER" id="PTHR21091:SF169">
    <property type="entry name" value="UROPORPHYRINOGEN DECARBOXYLASE"/>
    <property type="match status" value="1"/>
</dbReference>
<dbReference type="Pfam" id="PF01208">
    <property type="entry name" value="URO-D"/>
    <property type="match status" value="1"/>
</dbReference>
<dbReference type="SUPFAM" id="SSF51726">
    <property type="entry name" value="UROD/MetE-like"/>
    <property type="match status" value="1"/>
</dbReference>
<dbReference type="PROSITE" id="PS00906">
    <property type="entry name" value="UROD_1"/>
    <property type="match status" value="1"/>
</dbReference>
<dbReference type="PROSITE" id="PS00907">
    <property type="entry name" value="UROD_2"/>
    <property type="match status" value="1"/>
</dbReference>
<reference key="1">
    <citation type="journal article" date="2009" name="PLoS Genet.">
        <title>Organised genome dynamics in the Escherichia coli species results in highly diverse adaptive paths.</title>
        <authorList>
            <person name="Touchon M."/>
            <person name="Hoede C."/>
            <person name="Tenaillon O."/>
            <person name="Barbe V."/>
            <person name="Baeriswyl S."/>
            <person name="Bidet P."/>
            <person name="Bingen E."/>
            <person name="Bonacorsi S."/>
            <person name="Bouchier C."/>
            <person name="Bouvet O."/>
            <person name="Calteau A."/>
            <person name="Chiapello H."/>
            <person name="Clermont O."/>
            <person name="Cruveiller S."/>
            <person name="Danchin A."/>
            <person name="Diard M."/>
            <person name="Dossat C."/>
            <person name="Karoui M.E."/>
            <person name="Frapy E."/>
            <person name="Garry L."/>
            <person name="Ghigo J.M."/>
            <person name="Gilles A.M."/>
            <person name="Johnson J."/>
            <person name="Le Bouguenec C."/>
            <person name="Lescat M."/>
            <person name="Mangenot S."/>
            <person name="Martinez-Jehanne V."/>
            <person name="Matic I."/>
            <person name="Nassif X."/>
            <person name="Oztas S."/>
            <person name="Petit M.A."/>
            <person name="Pichon C."/>
            <person name="Rouy Z."/>
            <person name="Ruf C.S."/>
            <person name="Schneider D."/>
            <person name="Tourret J."/>
            <person name="Vacherie B."/>
            <person name="Vallenet D."/>
            <person name="Medigue C."/>
            <person name="Rocha E.P.C."/>
            <person name="Denamur E."/>
        </authorList>
    </citation>
    <scope>NUCLEOTIDE SEQUENCE [LARGE SCALE GENOMIC DNA]</scope>
    <source>
        <strain>UMN026 / ExPEC</strain>
    </source>
</reference>
<gene>
    <name evidence="1" type="primary">hemE</name>
    <name type="ordered locus">ECUMN_4521</name>
</gene>
<name>DCUP_ECOLU</name>
<comment type="function">
    <text evidence="1">Catalyzes the decarboxylation of four acetate groups of uroporphyrinogen-III to yield coproporphyrinogen-III.</text>
</comment>
<comment type="catalytic activity">
    <reaction evidence="1">
        <text>uroporphyrinogen III + 4 H(+) = coproporphyrinogen III + 4 CO2</text>
        <dbReference type="Rhea" id="RHEA:19865"/>
        <dbReference type="ChEBI" id="CHEBI:15378"/>
        <dbReference type="ChEBI" id="CHEBI:16526"/>
        <dbReference type="ChEBI" id="CHEBI:57308"/>
        <dbReference type="ChEBI" id="CHEBI:57309"/>
        <dbReference type="EC" id="4.1.1.37"/>
    </reaction>
</comment>
<comment type="pathway">
    <text evidence="1">Porphyrin-containing compound metabolism; protoporphyrin-IX biosynthesis; coproporphyrinogen-III from 5-aminolevulinate: step 4/4.</text>
</comment>
<comment type="subunit">
    <text evidence="1">Homodimer.</text>
</comment>
<comment type="subcellular location">
    <subcellularLocation>
        <location evidence="1">Cytoplasm</location>
    </subcellularLocation>
</comment>
<comment type="similarity">
    <text evidence="1">Belongs to the uroporphyrinogen decarboxylase family.</text>
</comment>
<sequence length="354" mass="39248">MTELKNDRYLRALLRQPVDVTPVWMMRQAGRYLPEYKATRAQAGDFMSLCKNAELACEVTLQPLRRYPLDAAILFSDILTVPDAMGLGLYFEAGEGPRFTSPVTCKADVDKLPIPDPEDELGYVMNAVRTIRRELKGEVPLIGFSGSPWTLATYMVEGGSSKAFTVIKKMMYADPQALHALLDKLAKSVTLYLNAQIKAGAQAVMIFDTWGGVLTGRDYQQFSLYYMHKIVDGLLRENDGRRVPVTLFTKGGGQWLEAMAETGCDALGLDWTTDIADARRRVGNKVALQGNMDPSMLYAPPARIEEEVATILAGFGHGEGHVFNLGHGIHQDVPPEHAGVFVEAVHRLSEQYHR</sequence>
<organism>
    <name type="scientific">Escherichia coli O17:K52:H18 (strain UMN026 / ExPEC)</name>
    <dbReference type="NCBI Taxonomy" id="585056"/>
    <lineage>
        <taxon>Bacteria</taxon>
        <taxon>Pseudomonadati</taxon>
        <taxon>Pseudomonadota</taxon>
        <taxon>Gammaproteobacteria</taxon>
        <taxon>Enterobacterales</taxon>
        <taxon>Enterobacteriaceae</taxon>
        <taxon>Escherichia</taxon>
    </lineage>
</organism>
<feature type="chain" id="PRO_1000197520" description="Uroporphyrinogen decarboxylase">
    <location>
        <begin position="1"/>
        <end position="354"/>
    </location>
</feature>
<feature type="binding site" evidence="1">
    <location>
        <begin position="27"/>
        <end position="31"/>
    </location>
    <ligand>
        <name>substrate</name>
    </ligand>
</feature>
<feature type="binding site" evidence="1">
    <location>
        <position position="77"/>
    </location>
    <ligand>
        <name>substrate</name>
    </ligand>
</feature>
<feature type="binding site" evidence="1">
    <location>
        <position position="154"/>
    </location>
    <ligand>
        <name>substrate</name>
    </ligand>
</feature>
<feature type="binding site" evidence="1">
    <location>
        <position position="209"/>
    </location>
    <ligand>
        <name>substrate</name>
    </ligand>
</feature>
<feature type="binding site" evidence="1">
    <location>
        <position position="327"/>
    </location>
    <ligand>
        <name>substrate</name>
    </ligand>
</feature>
<feature type="site" description="Transition state stabilizer" evidence="1">
    <location>
        <position position="77"/>
    </location>
</feature>
<keyword id="KW-0963">Cytoplasm</keyword>
<keyword id="KW-0210">Decarboxylase</keyword>
<keyword id="KW-0456">Lyase</keyword>
<keyword id="KW-0627">Porphyrin biosynthesis</keyword>
<evidence type="ECO:0000255" key="1">
    <source>
        <dbReference type="HAMAP-Rule" id="MF_00218"/>
    </source>
</evidence>
<accession>B7NFT8</accession>
<proteinExistence type="inferred from homology"/>